<evidence type="ECO:0000250" key="1">
    <source>
        <dbReference type="UniProtKB" id="P04254"/>
    </source>
</evidence>
<evidence type="ECO:0000255" key="2">
    <source>
        <dbReference type="PROSITE-ProRule" id="PRU00498"/>
    </source>
</evidence>
<evidence type="ECO:0000269" key="3">
    <source>
    </source>
</evidence>
<evidence type="ECO:0000269" key="4">
    <source>
    </source>
</evidence>
<evidence type="ECO:0000269" key="5">
    <source ref="2"/>
</evidence>
<evidence type="ECO:0000305" key="6"/>
<proteinExistence type="evidence at protein level"/>
<dbReference type="PIR" id="S02707">
    <property type="entry name" value="BHLOB"/>
</dbReference>
<dbReference type="SMR" id="P10787"/>
<dbReference type="GO" id="GO:0005576">
    <property type="term" value="C:extracellular region"/>
    <property type="evidence" value="ECO:0007669"/>
    <property type="project" value="UniProtKB-SubCell"/>
</dbReference>
<dbReference type="GO" id="GO:0046872">
    <property type="term" value="F:metal ion binding"/>
    <property type="evidence" value="ECO:0007669"/>
    <property type="project" value="UniProtKB-KW"/>
</dbReference>
<dbReference type="GO" id="GO:0016491">
    <property type="term" value="F:oxidoreductase activity"/>
    <property type="evidence" value="ECO:0007669"/>
    <property type="project" value="InterPro"/>
</dbReference>
<dbReference type="GO" id="GO:0005344">
    <property type="term" value="F:oxygen carrier activity"/>
    <property type="evidence" value="ECO:0007669"/>
    <property type="project" value="UniProtKB-KW"/>
</dbReference>
<dbReference type="Gene3D" id="1.10.1280.10">
    <property type="entry name" value="Di-copper center containing domain from catechol oxidase"/>
    <property type="match status" value="1"/>
</dbReference>
<dbReference type="Gene3D" id="2.60.40.1520">
    <property type="entry name" value="Hemocyanin, C-terminal domain"/>
    <property type="match status" value="1"/>
</dbReference>
<dbReference type="Gene3D" id="1.20.1370.10">
    <property type="entry name" value="Hemocyanin, N-terminal domain"/>
    <property type="match status" value="1"/>
</dbReference>
<dbReference type="InterPro" id="IPR008922">
    <property type="entry name" value="Di-copper_centre_dom_sf"/>
</dbReference>
<dbReference type="InterPro" id="IPR013788">
    <property type="entry name" value="Hemocyanin/hexamerin"/>
</dbReference>
<dbReference type="InterPro" id="IPR000896">
    <property type="entry name" value="Hemocyanin/hexamerin_mid_dom"/>
</dbReference>
<dbReference type="InterPro" id="IPR005203">
    <property type="entry name" value="Hemocyanin_C"/>
</dbReference>
<dbReference type="InterPro" id="IPR037020">
    <property type="entry name" value="Hemocyanin_C_sf"/>
</dbReference>
<dbReference type="InterPro" id="IPR005204">
    <property type="entry name" value="Hemocyanin_N"/>
</dbReference>
<dbReference type="InterPro" id="IPR036697">
    <property type="entry name" value="Hemocyanin_N_sf"/>
</dbReference>
<dbReference type="InterPro" id="IPR014756">
    <property type="entry name" value="Ig_E-set"/>
</dbReference>
<dbReference type="InterPro" id="IPR002227">
    <property type="entry name" value="Tyrosinase_Cu-bd"/>
</dbReference>
<dbReference type="PANTHER" id="PTHR11511:SF5">
    <property type="entry name" value="FAT-BODY PROTEIN 1-RELATED"/>
    <property type="match status" value="1"/>
</dbReference>
<dbReference type="PANTHER" id="PTHR11511">
    <property type="entry name" value="LARVAL STORAGE PROTEIN/PHENOLOXIDASE"/>
    <property type="match status" value="1"/>
</dbReference>
<dbReference type="Pfam" id="PF03723">
    <property type="entry name" value="Hemocyanin_C"/>
    <property type="match status" value="1"/>
</dbReference>
<dbReference type="Pfam" id="PF00372">
    <property type="entry name" value="Hemocyanin_M"/>
    <property type="match status" value="1"/>
</dbReference>
<dbReference type="Pfam" id="PF03722">
    <property type="entry name" value="Hemocyanin_N"/>
    <property type="match status" value="1"/>
</dbReference>
<dbReference type="PRINTS" id="PR00187">
    <property type="entry name" value="HAEMOCYANIN"/>
</dbReference>
<dbReference type="SUPFAM" id="SSF48056">
    <property type="entry name" value="Di-copper centre-containing domain"/>
    <property type="match status" value="1"/>
</dbReference>
<dbReference type="SUPFAM" id="SSF81296">
    <property type="entry name" value="E set domains"/>
    <property type="match status" value="1"/>
</dbReference>
<dbReference type="SUPFAM" id="SSF48050">
    <property type="entry name" value="Hemocyanin, N-terminal domain"/>
    <property type="match status" value="1"/>
</dbReference>
<dbReference type="PROSITE" id="PS00209">
    <property type="entry name" value="HEMOCYANIN_1"/>
    <property type="match status" value="1"/>
</dbReference>
<dbReference type="PROSITE" id="PS00210">
    <property type="entry name" value="HEMOCYANIN_2"/>
    <property type="match status" value="1"/>
</dbReference>
<dbReference type="PROSITE" id="PS00498">
    <property type="entry name" value="TYROSINASE_2"/>
    <property type="match status" value="1"/>
</dbReference>
<protein>
    <recommendedName>
        <fullName>Hemocyanin B chain</fullName>
    </recommendedName>
</protein>
<sequence length="657" mass="75392">DALGTGNANKQQDINHLLDKIYEPTKYPDLKDIAENFNPLGDTSIYNDHGAAAEALMKELNDHRLLEQRHWFSLFNTRQREEALMLFAVLNQCKEWYCFRSNAAYFRERMNEGEFVYALYVSVIHSKLGDGIVLPPLYEITPHMFTNSEVIDKAYSAKMTQKPGTFNVSFTGTKKNREQRVAYFGEDIGMNIHHVTWHMDFPTWWQDSYGYHLDRKGELFFWVHHQLTARFDFERLSNWLDPVDELHWDRIIREGFAPLTSYKYGGEFPVRPDNIHFEDVDGVAHVHDLEITESRIHDAIDHGYITDSDGHTIDIRQPKGIELLGDIIESSMYSSNVQYYGSLHNTAHAMLGRQGDPHGKFNLPPGVMEHFETATRDPSFFRLHKYMDNIFKKHTDSFPPYTHDDLEFAGMVVDGIAIDGELITFFDEFQYSILNAVDSGENIEDVDINARVHRLNHNEFTYKITMSNNNDGERLATFRIFLCPIEDNNGITLTLDEARWFCIELDKFFQKVPSGPETIERSSKDSSVTVPDMPSFQSLKEQADNAVNGGHDLDLSAYERSCGIPDRMLLPKSKPEGMKFNLYVAVTDGDKDTEGHNGGHDYGGTHAQCGVHGEAFPDNRPLGYPLERRIPDERVIDGVSNIKHVVVKIVHHLEHHD</sequence>
<accession>P10787</accession>
<name>HCYB_PANIN</name>
<reference key="1">
    <citation type="journal article" date="1988" name="Eur. J. Biochem.">
        <title>Panulirus interruptus hemocyanin. The amino acid sequence of subunit b and anomalous behaviour of subunits a and b on polyacrylamide gel electrophoresis in the presence of SDS.</title>
        <authorList>
            <person name="Jekel P.A."/>
            <person name="Bak H.J."/>
            <person name="Soeter N.M."/>
            <person name="Verejken J.M."/>
            <person name="Beintema J.J."/>
        </authorList>
    </citation>
    <scope>PROTEIN SEQUENCE</scope>
    <scope>SUBCELLULAR LOCATION</scope>
    <scope>TISSUE SPECIFICITY</scope>
</reference>
<reference key="2">
    <citation type="journal article" date="1984" name="Nature">
        <title>3.2-A structure of the copper-containing, oxygen-carrying protein Panulirus interruptus haemocyanin.</title>
        <authorList>
            <person name="Gaykema W.P.J."/>
            <person name="Hol W.G.J."/>
            <person name="Vereijken J.M."/>
            <person name="Soeter N.M."/>
            <person name="Bak H.J."/>
            <person name="Beintema J.J."/>
        </authorList>
    </citation>
    <scope>X-RAY CRYSTALLOGRAPHY (3.2 ANGSTROMS)</scope>
    <scope>FUNCTION</scope>
    <scope>SUBUNIT</scope>
</reference>
<reference key="3">
    <citation type="journal article" date="1989" name="J. Mol. Biol.">
        <title>Crystal structure of hexameric haemocyanin from Panulirus interruptus refined at 3.2-A resolution.</title>
        <authorList>
            <person name="Volbeda A."/>
            <person name="Hol W.G.J."/>
        </authorList>
    </citation>
    <scope>X-RAY CRYSTALLOGRAPHY (3.2 ANGSTROMS)</scope>
    <scope>FUNCTION</scope>
    <scope>SUBUNIT</scope>
    <scope>COPPER-BINDING SITES</scope>
    <scope>DISULFIDE BOND</scope>
</reference>
<keyword id="KW-0186">Copper</keyword>
<keyword id="KW-0903">Direct protein sequencing</keyword>
<keyword id="KW-1015">Disulfide bond</keyword>
<keyword id="KW-0325">Glycoprotein</keyword>
<keyword id="KW-0479">Metal-binding</keyword>
<keyword id="KW-0561">Oxygen transport</keyword>
<keyword id="KW-0964">Secreted</keyword>
<keyword id="KW-0813">Transport</keyword>
<comment type="function">
    <text evidence="3 5">Hemocyanins are copper-containing oxygen carriers occurring freely dissolved in the hemolymph of many mollusks and arthropods.</text>
</comment>
<comment type="subunit">
    <text evidence="3 5">Hexamer of a number of different chains, of which A, B, and C have been identified.</text>
</comment>
<comment type="subcellular location">
    <subcellularLocation>
        <location evidence="4">Secreted</location>
        <location evidence="4">Extracellular space</location>
    </subcellularLocation>
</comment>
<comment type="tissue specificity">
    <text evidence="4">Hemolymph.</text>
</comment>
<comment type="miscellaneous">
    <text evidence="3">The B chain contains two copper-binding sites (PubMed:2585484). Three histidine residues are ligands to each copper ion (PubMed:2585484).</text>
</comment>
<comment type="similarity">
    <text evidence="6">Belongs to the tyrosinase family. Hemocyanin subfamily.</text>
</comment>
<feature type="chain" id="PRO_0000204292" description="Hemocyanin B chain">
    <location>
        <begin position="1"/>
        <end position="657"/>
    </location>
</feature>
<feature type="binding site" evidence="3">
    <location>
        <position position="194"/>
    </location>
    <ligand>
        <name>Cu cation</name>
        <dbReference type="ChEBI" id="CHEBI:23378"/>
        <label>A</label>
    </ligand>
</feature>
<feature type="binding site" evidence="3">
    <location>
        <position position="198"/>
    </location>
    <ligand>
        <name>Cu cation</name>
        <dbReference type="ChEBI" id="CHEBI:23378"/>
        <label>A</label>
    </ligand>
</feature>
<feature type="binding site" evidence="3">
    <location>
        <position position="224"/>
    </location>
    <ligand>
        <name>Cu cation</name>
        <dbReference type="ChEBI" id="CHEBI:23378"/>
        <label>A</label>
    </ligand>
</feature>
<feature type="binding site" evidence="3">
    <location>
        <position position="344"/>
    </location>
    <ligand>
        <name>Cu cation</name>
        <dbReference type="ChEBI" id="CHEBI:23378"/>
        <label>B</label>
    </ligand>
</feature>
<feature type="binding site" evidence="3">
    <location>
        <position position="348"/>
    </location>
    <ligand>
        <name>Cu cation</name>
        <dbReference type="ChEBI" id="CHEBI:23378"/>
        <label>B</label>
    </ligand>
</feature>
<feature type="binding site" evidence="3">
    <location>
        <position position="384"/>
    </location>
    <ligand>
        <name>Cu cation</name>
        <dbReference type="ChEBI" id="CHEBI:23378"/>
        <label>B</label>
    </ligand>
</feature>
<feature type="glycosylation site" description="N-linked (GlcNAc...) asparagine" evidence="2">
    <location>
        <position position="167"/>
    </location>
</feature>
<feature type="disulfide bond" evidence="1">
    <location>
        <begin position="93"/>
        <end position="98"/>
    </location>
</feature>
<feature type="disulfide bond" evidence="1">
    <location>
        <begin position="483"/>
        <end position="502"/>
    </location>
</feature>
<feature type="disulfide bond" evidence="3">
    <location>
        <begin position="562"/>
        <end position="609"/>
    </location>
</feature>
<feature type="sequence variant" description="In minor component B'.">
    <original>D</original>
    <variation>E</variation>
    <location>
        <position position="32"/>
    </location>
</feature>
<feature type="sequence variant" description="In minor component B'.">
    <original>H</original>
    <variation>Q</variation>
    <location>
        <position position="49"/>
    </location>
</feature>
<feature type="sequence variant" description="In minor component B'.">
    <original>S</original>
    <variation>G</variation>
    <location>
        <position position="122"/>
    </location>
</feature>
<feature type="sequence variant" description="In minor component B'.">
    <original>D</original>
    <variation>K</variation>
    <location>
        <position position="130"/>
    </location>
</feature>
<feature type="sequence variant" description="In minor component B'.">
    <original>I</original>
    <variation>V</variation>
    <location>
        <position position="132"/>
    </location>
</feature>
<feature type="sequence variant" description="In minor component B'.">
    <original>S</original>
    <variation>A</variation>
    <location>
        <position position="561"/>
    </location>
</feature>
<organism>
    <name type="scientific">Panulirus interruptus</name>
    <name type="common">California spiny lobster</name>
    <name type="synonym">Palinurus interruptus</name>
    <dbReference type="NCBI Taxonomy" id="6735"/>
    <lineage>
        <taxon>Eukaryota</taxon>
        <taxon>Metazoa</taxon>
        <taxon>Ecdysozoa</taxon>
        <taxon>Arthropoda</taxon>
        <taxon>Crustacea</taxon>
        <taxon>Multicrustacea</taxon>
        <taxon>Malacostraca</taxon>
        <taxon>Eumalacostraca</taxon>
        <taxon>Eucarida</taxon>
        <taxon>Decapoda</taxon>
        <taxon>Pleocyemata</taxon>
        <taxon>Achelata</taxon>
        <taxon>Palinuroidea</taxon>
        <taxon>Palinuridae</taxon>
        <taxon>Panulirus</taxon>
    </lineage>
</organism>